<organism>
    <name type="scientific">Rickettsia felis (strain ATCC VR-1525 / URRWXCal2)</name>
    <name type="common">Rickettsia azadi</name>
    <dbReference type="NCBI Taxonomy" id="315456"/>
    <lineage>
        <taxon>Bacteria</taxon>
        <taxon>Pseudomonadati</taxon>
        <taxon>Pseudomonadota</taxon>
        <taxon>Alphaproteobacteria</taxon>
        <taxon>Rickettsiales</taxon>
        <taxon>Rickettsiaceae</taxon>
        <taxon>Rickettsieae</taxon>
        <taxon>Rickettsia</taxon>
        <taxon>spotted fever group</taxon>
    </lineage>
</organism>
<reference key="1">
    <citation type="journal article" date="2005" name="PLoS Biol.">
        <title>The genome sequence of Rickettsia felis identifies the first putative conjugative plasmid in an obligate intracellular parasite.</title>
        <authorList>
            <person name="Ogata H."/>
            <person name="Renesto P."/>
            <person name="Audic S."/>
            <person name="Robert C."/>
            <person name="Blanc G."/>
            <person name="Fournier P.-E."/>
            <person name="Parinello H."/>
            <person name="Claverie J.-M."/>
            <person name="Raoult D."/>
        </authorList>
    </citation>
    <scope>NUCLEOTIDE SEQUENCE [LARGE SCALE GENOMIC DNA]</scope>
    <source>
        <strain>ATCC VR-1525 / URRWXCal2</strain>
    </source>
</reference>
<evidence type="ECO:0000250" key="1"/>
<evidence type="ECO:0000255" key="2"/>
<evidence type="ECO:0000305" key="3"/>
<dbReference type="EMBL" id="CP000053">
    <property type="protein sequence ID" value="AAY60912.1"/>
    <property type="molecule type" value="Genomic_DNA"/>
</dbReference>
<dbReference type="SMR" id="Q4UNE6"/>
<dbReference type="STRING" id="315456.RF_0061"/>
<dbReference type="KEGG" id="rfe:RF_0061"/>
<dbReference type="eggNOG" id="COG0697">
    <property type="taxonomic scope" value="Bacteria"/>
</dbReference>
<dbReference type="HOGENOM" id="CLU_032828_0_0_5"/>
<dbReference type="OrthoDB" id="9812899at2"/>
<dbReference type="Proteomes" id="UP000008548">
    <property type="component" value="Chromosome"/>
</dbReference>
<dbReference type="GO" id="GO:0005886">
    <property type="term" value="C:plasma membrane"/>
    <property type="evidence" value="ECO:0007669"/>
    <property type="project" value="UniProtKB-SubCell"/>
</dbReference>
<dbReference type="GO" id="GO:0006865">
    <property type="term" value="P:amino acid transport"/>
    <property type="evidence" value="ECO:0007669"/>
    <property type="project" value="UniProtKB-KW"/>
</dbReference>
<dbReference type="InterPro" id="IPR000620">
    <property type="entry name" value="EamA_dom"/>
</dbReference>
<dbReference type="PANTHER" id="PTHR22911">
    <property type="entry name" value="ACYL-MALONYL CONDENSING ENZYME-RELATED"/>
    <property type="match status" value="1"/>
</dbReference>
<dbReference type="PANTHER" id="PTHR22911:SF6">
    <property type="entry name" value="SOLUTE CARRIER FAMILY 35 MEMBER G1"/>
    <property type="match status" value="1"/>
</dbReference>
<dbReference type="Pfam" id="PF00892">
    <property type="entry name" value="EamA"/>
    <property type="match status" value="2"/>
</dbReference>
<dbReference type="SUPFAM" id="SSF103481">
    <property type="entry name" value="Multidrug resistance efflux transporter EmrE"/>
    <property type="match status" value="2"/>
</dbReference>
<accession>Q4UNE6</accession>
<keyword id="KW-0029">Amino-acid transport</keyword>
<keyword id="KW-0997">Cell inner membrane</keyword>
<keyword id="KW-1003">Cell membrane</keyword>
<keyword id="KW-0472">Membrane</keyword>
<keyword id="KW-0677">Repeat</keyword>
<keyword id="KW-0812">Transmembrane</keyword>
<keyword id="KW-1133">Transmembrane helix</keyword>
<keyword id="KW-0813">Transport</keyword>
<sequence>MNDALKTYLTGIGWFLLSLVSSSANDVMSKYLGTRLHSFEVAFFRFFFSSIVLLPFVFYHGKNTLKTSRPFVHILRGLLLFFGMTSWTYGLTIAPVTTATVVSFSIPLFTLILAVFFLNENIIWQRWVVTVVGFIGLVVTLKPHTEDFNPEILYFVLAAISFAMLDIINKKFVIKESMISMLFYSAIVTAVVSLPVASQYWLTPSGFELALLFVLGSSGSLILFFLLKAFSMVDATATAPYRYLELVISAIAAYFIFSEFPDKSTLHGAVIIIPATLFIIYSEKKAMSRKHESQ</sequence>
<comment type="function">
    <text evidence="1">Transports S-adenosylmethionine.</text>
</comment>
<comment type="subcellular location">
    <subcellularLocation>
        <location evidence="3">Cell inner membrane</location>
        <topology evidence="3">Multi-pass membrane protein</topology>
    </subcellularLocation>
</comment>
<comment type="similarity">
    <text evidence="3">Belongs to the drug/metabolite transporter (DMT) superfamily. 10 TMS drug/metabolite exporter (DME) (TC 2.A.7.3) family.</text>
</comment>
<name>SAM_RICFE</name>
<protein>
    <recommendedName>
        <fullName>S-adenosylmethionine uptake transporter</fullName>
    </recommendedName>
</protein>
<gene>
    <name type="primary">sam</name>
    <name type="ordered locus">RF_0061</name>
</gene>
<feature type="chain" id="PRO_0000280996" description="S-adenosylmethionine uptake transporter">
    <location>
        <begin position="1"/>
        <end position="294"/>
    </location>
</feature>
<feature type="transmembrane region" description="Helical" evidence="2">
    <location>
        <begin position="4"/>
        <end position="24"/>
    </location>
</feature>
<feature type="transmembrane region" description="Helical" evidence="2">
    <location>
        <begin position="39"/>
        <end position="59"/>
    </location>
</feature>
<feature type="transmembrane region" description="Helical" evidence="2">
    <location>
        <begin position="74"/>
        <end position="91"/>
    </location>
</feature>
<feature type="transmembrane region" description="Helical" evidence="2">
    <location>
        <begin position="98"/>
        <end position="118"/>
    </location>
</feature>
<feature type="transmembrane region" description="Helical" evidence="2">
    <location>
        <begin position="121"/>
        <end position="141"/>
    </location>
</feature>
<feature type="transmembrane region" description="Helical" evidence="2">
    <location>
        <begin position="148"/>
        <end position="168"/>
    </location>
</feature>
<feature type="transmembrane region" description="Helical" evidence="2">
    <location>
        <begin position="177"/>
        <end position="197"/>
    </location>
</feature>
<feature type="transmembrane region" description="Helical" evidence="2">
    <location>
        <begin position="207"/>
        <end position="227"/>
    </location>
</feature>
<feature type="transmembrane region" description="Helical" evidence="2">
    <location>
        <begin position="237"/>
        <end position="257"/>
    </location>
</feature>
<feature type="transmembrane region" description="Helical" evidence="2">
    <location>
        <begin position="260"/>
        <end position="280"/>
    </location>
</feature>
<feature type="domain" description="EamA 1">
    <location>
        <begin position="21"/>
        <end position="141"/>
    </location>
</feature>
<feature type="domain" description="EamA 2">
    <location>
        <begin position="160"/>
        <end position="280"/>
    </location>
</feature>
<proteinExistence type="inferred from homology"/>